<gene>
    <name evidence="1" type="primary">rpsH</name>
    <name type="ordered locus">Bcenmc03_0341</name>
</gene>
<organism>
    <name type="scientific">Burkholderia orbicola (strain MC0-3)</name>
    <dbReference type="NCBI Taxonomy" id="406425"/>
    <lineage>
        <taxon>Bacteria</taxon>
        <taxon>Pseudomonadati</taxon>
        <taxon>Pseudomonadota</taxon>
        <taxon>Betaproteobacteria</taxon>
        <taxon>Burkholderiales</taxon>
        <taxon>Burkholderiaceae</taxon>
        <taxon>Burkholderia</taxon>
        <taxon>Burkholderia cepacia complex</taxon>
        <taxon>Burkholderia orbicola</taxon>
    </lineage>
</organism>
<comment type="function">
    <text evidence="1">One of the primary rRNA binding proteins, it binds directly to 16S rRNA central domain where it helps coordinate assembly of the platform of the 30S subunit.</text>
</comment>
<comment type="subunit">
    <text evidence="1">Part of the 30S ribosomal subunit. Contacts proteins S5 and S12.</text>
</comment>
<comment type="similarity">
    <text evidence="1">Belongs to the universal ribosomal protein uS8 family.</text>
</comment>
<reference key="1">
    <citation type="submission" date="2008-02" db="EMBL/GenBank/DDBJ databases">
        <title>Complete sequence of chromosome 1 of Burkholderia cenocepacia MC0-3.</title>
        <authorList>
            <person name="Copeland A."/>
            <person name="Lucas S."/>
            <person name="Lapidus A."/>
            <person name="Barry K."/>
            <person name="Bruce D."/>
            <person name="Goodwin L."/>
            <person name="Glavina del Rio T."/>
            <person name="Dalin E."/>
            <person name="Tice H."/>
            <person name="Pitluck S."/>
            <person name="Chain P."/>
            <person name="Malfatti S."/>
            <person name="Shin M."/>
            <person name="Vergez L."/>
            <person name="Schmutz J."/>
            <person name="Larimer F."/>
            <person name="Land M."/>
            <person name="Hauser L."/>
            <person name="Kyrpides N."/>
            <person name="Mikhailova N."/>
            <person name="Tiedje J."/>
            <person name="Richardson P."/>
        </authorList>
    </citation>
    <scope>NUCLEOTIDE SEQUENCE [LARGE SCALE GENOMIC DNA]</scope>
    <source>
        <strain>MC0-3</strain>
    </source>
</reference>
<name>RS8_BURO0</name>
<accession>B1JU36</accession>
<sequence>MSMSDPIADMLTRIRNAQMVEKVSVAMPSSKVKVAIAQVLKDEGYIDDFAVKAEGAKSELNIALKYYAGRPVIERLERVSKPGLRVYRGRNDIPQVMNGLGVAIVSTPKGVMTDRKARATGVGGEVICYVA</sequence>
<keyword id="KW-0687">Ribonucleoprotein</keyword>
<keyword id="KW-0689">Ribosomal protein</keyword>
<keyword id="KW-0694">RNA-binding</keyword>
<keyword id="KW-0699">rRNA-binding</keyword>
<proteinExistence type="inferred from homology"/>
<feature type="chain" id="PRO_1000140522" description="Small ribosomal subunit protein uS8">
    <location>
        <begin position="1"/>
        <end position="131"/>
    </location>
</feature>
<dbReference type="EMBL" id="CP000958">
    <property type="protein sequence ID" value="ACA89521.1"/>
    <property type="molecule type" value="Genomic_DNA"/>
</dbReference>
<dbReference type="RefSeq" id="WP_006477185.1">
    <property type="nucleotide sequence ID" value="NC_010508.1"/>
</dbReference>
<dbReference type="SMR" id="B1JU36"/>
<dbReference type="GeneID" id="98107146"/>
<dbReference type="KEGG" id="bcm:Bcenmc03_0341"/>
<dbReference type="HOGENOM" id="CLU_098428_0_0_4"/>
<dbReference type="Proteomes" id="UP000002169">
    <property type="component" value="Chromosome 1"/>
</dbReference>
<dbReference type="GO" id="GO:1990904">
    <property type="term" value="C:ribonucleoprotein complex"/>
    <property type="evidence" value="ECO:0007669"/>
    <property type="project" value="UniProtKB-KW"/>
</dbReference>
<dbReference type="GO" id="GO:0005840">
    <property type="term" value="C:ribosome"/>
    <property type="evidence" value="ECO:0007669"/>
    <property type="project" value="UniProtKB-KW"/>
</dbReference>
<dbReference type="GO" id="GO:0019843">
    <property type="term" value="F:rRNA binding"/>
    <property type="evidence" value="ECO:0007669"/>
    <property type="project" value="UniProtKB-UniRule"/>
</dbReference>
<dbReference type="GO" id="GO:0003735">
    <property type="term" value="F:structural constituent of ribosome"/>
    <property type="evidence" value="ECO:0007669"/>
    <property type="project" value="InterPro"/>
</dbReference>
<dbReference type="GO" id="GO:0006412">
    <property type="term" value="P:translation"/>
    <property type="evidence" value="ECO:0007669"/>
    <property type="project" value="UniProtKB-UniRule"/>
</dbReference>
<dbReference type="FunFam" id="3.30.1370.30:FF:000003">
    <property type="entry name" value="30S ribosomal protein S8"/>
    <property type="match status" value="1"/>
</dbReference>
<dbReference type="FunFam" id="3.30.1490.10:FF:000001">
    <property type="entry name" value="30S ribosomal protein S8"/>
    <property type="match status" value="1"/>
</dbReference>
<dbReference type="Gene3D" id="3.30.1370.30">
    <property type="match status" value="1"/>
</dbReference>
<dbReference type="Gene3D" id="3.30.1490.10">
    <property type="match status" value="1"/>
</dbReference>
<dbReference type="HAMAP" id="MF_01302_B">
    <property type="entry name" value="Ribosomal_uS8_B"/>
    <property type="match status" value="1"/>
</dbReference>
<dbReference type="InterPro" id="IPR000630">
    <property type="entry name" value="Ribosomal_uS8"/>
</dbReference>
<dbReference type="InterPro" id="IPR047863">
    <property type="entry name" value="Ribosomal_uS8_CS"/>
</dbReference>
<dbReference type="InterPro" id="IPR035987">
    <property type="entry name" value="Ribosomal_uS8_sf"/>
</dbReference>
<dbReference type="NCBIfam" id="NF001109">
    <property type="entry name" value="PRK00136.1"/>
    <property type="match status" value="1"/>
</dbReference>
<dbReference type="PANTHER" id="PTHR11758">
    <property type="entry name" value="40S RIBOSOMAL PROTEIN S15A"/>
    <property type="match status" value="1"/>
</dbReference>
<dbReference type="Pfam" id="PF00410">
    <property type="entry name" value="Ribosomal_S8"/>
    <property type="match status" value="1"/>
</dbReference>
<dbReference type="SUPFAM" id="SSF56047">
    <property type="entry name" value="Ribosomal protein S8"/>
    <property type="match status" value="1"/>
</dbReference>
<dbReference type="PROSITE" id="PS00053">
    <property type="entry name" value="RIBOSOMAL_S8"/>
    <property type="match status" value="1"/>
</dbReference>
<protein>
    <recommendedName>
        <fullName evidence="1">Small ribosomal subunit protein uS8</fullName>
    </recommendedName>
    <alternativeName>
        <fullName evidence="2">30S ribosomal protein S8</fullName>
    </alternativeName>
</protein>
<evidence type="ECO:0000255" key="1">
    <source>
        <dbReference type="HAMAP-Rule" id="MF_01302"/>
    </source>
</evidence>
<evidence type="ECO:0000305" key="2"/>